<reference key="1">
    <citation type="journal article" date="1985" name="Biochem. J.">
        <title>Nucleotide sequence of the Rhodospirillum rubrum atp operon.</title>
        <authorList>
            <person name="Falk G."/>
            <person name="Hampe A."/>
            <person name="Walker J.E."/>
        </authorList>
    </citation>
    <scope>NUCLEOTIDE SEQUENCE [GENOMIC DNA]</scope>
</reference>
<reference key="2">
    <citation type="journal article" date="1992" name="FEBS Lett.">
        <title>Isolation and characterisation of a functional alpha beta heterodimer from the ATP synthase of Rhodospirillum rubrum.</title>
        <authorList>
            <person name="Andralojc P.J."/>
            <person name="Harris D.A."/>
        </authorList>
    </citation>
    <scope>PROTEIN SEQUENCE OF 2-20</scope>
</reference>
<name>ATPB_RHORU</name>
<proteinExistence type="evidence at protein level"/>
<protein>
    <recommendedName>
        <fullName evidence="1">ATP synthase subunit beta</fullName>
        <ecNumber evidence="1">7.1.2.2</ecNumber>
    </recommendedName>
    <alternativeName>
        <fullName evidence="1">ATP synthase F1 sector subunit beta</fullName>
    </alternativeName>
    <alternativeName>
        <fullName evidence="1">F-ATPase subunit beta</fullName>
    </alternativeName>
</protein>
<accession>P05038</accession>
<feature type="initiator methionine" description="Removed" evidence="2">
    <location>
        <position position="1"/>
    </location>
</feature>
<feature type="chain" id="PRO_0000144463" description="ATP synthase subunit beta">
    <location>
        <begin position="2"/>
        <end position="474"/>
    </location>
</feature>
<feature type="binding site" evidence="1">
    <location>
        <begin position="152"/>
        <end position="159"/>
    </location>
    <ligand>
        <name>ATP</name>
        <dbReference type="ChEBI" id="CHEBI:30616"/>
    </ligand>
</feature>
<sequence>MAKNNLGTITQVTGAVVDVKFEGELPSILSALETDNHGNRLVLEVAQHLGESVVRTIAMDSTEGLVRGQQVTSTGGPITVPVGPQVLGRIMNVIGEPVDERGPVVTAQRYPIHRQAPTFAEQATETEILVTGIKVIDLIAPYTKGGKVGLFGGAGVGKTVLIQELINNVAKGHGGYSVFAGVGERTREGNDLYHEMIDAGIIDLEGDKSKVALVYGQMNEPPGARARVALAGLTQAEYFRDEEGQDVLFFVDNIFRFTQAGSEVSALLGRIPSAVGYQPTLATDMGALQERITSTKKGSITSVQAIYVPADDLTDPAPAASFAHLDATTTLNRSIAELGIYPAVDPLDSTSRALDPLVVGEEHYKVAREVQRVLQTYKSLQDIIAILGMDELSEEDRLVVARARKIQRFLSQPFHVAEVFTGSPGKLVSLEDTIKGFKGLVEGEYDHLPEQAFYMVGNMAEAIEKAKKMAAEAA</sequence>
<keyword id="KW-0066">ATP synthesis</keyword>
<keyword id="KW-0067">ATP-binding</keyword>
<keyword id="KW-0997">Cell inner membrane</keyword>
<keyword id="KW-1003">Cell membrane</keyword>
<keyword id="KW-0139">CF(1)</keyword>
<keyword id="KW-0903">Direct protein sequencing</keyword>
<keyword id="KW-0375">Hydrogen ion transport</keyword>
<keyword id="KW-0406">Ion transport</keyword>
<keyword id="KW-0472">Membrane</keyword>
<keyword id="KW-0547">Nucleotide-binding</keyword>
<keyword id="KW-1278">Translocase</keyword>
<keyword id="KW-0813">Transport</keyword>
<organism>
    <name type="scientific">Rhodospirillum rubrum</name>
    <dbReference type="NCBI Taxonomy" id="1085"/>
    <lineage>
        <taxon>Bacteria</taxon>
        <taxon>Pseudomonadati</taxon>
        <taxon>Pseudomonadota</taxon>
        <taxon>Alphaproteobacteria</taxon>
        <taxon>Rhodospirillales</taxon>
        <taxon>Rhodospirillaceae</taxon>
        <taxon>Rhodospirillum</taxon>
    </lineage>
</organism>
<gene>
    <name evidence="1" type="primary">atpD</name>
</gene>
<dbReference type="EC" id="7.1.2.2" evidence="1"/>
<dbReference type="EMBL" id="X02499">
    <property type="protein sequence ID" value="CAA26340.1"/>
    <property type="molecule type" value="Genomic_DNA"/>
</dbReference>
<dbReference type="PIR" id="S08583">
    <property type="entry name" value="PWQFB"/>
</dbReference>
<dbReference type="RefSeq" id="WP_011388981.1">
    <property type="nucleotide sequence ID" value="NZ_DAMDTZ010000168.1"/>
</dbReference>
<dbReference type="SMR" id="P05038"/>
<dbReference type="OMA" id="SMEEGGW"/>
<dbReference type="GO" id="GO:0005886">
    <property type="term" value="C:plasma membrane"/>
    <property type="evidence" value="ECO:0007669"/>
    <property type="project" value="UniProtKB-SubCell"/>
</dbReference>
<dbReference type="GO" id="GO:0045259">
    <property type="term" value="C:proton-transporting ATP synthase complex"/>
    <property type="evidence" value="ECO:0007669"/>
    <property type="project" value="UniProtKB-KW"/>
</dbReference>
<dbReference type="GO" id="GO:0005524">
    <property type="term" value="F:ATP binding"/>
    <property type="evidence" value="ECO:0007669"/>
    <property type="project" value="UniProtKB-UniRule"/>
</dbReference>
<dbReference type="GO" id="GO:0016887">
    <property type="term" value="F:ATP hydrolysis activity"/>
    <property type="evidence" value="ECO:0007669"/>
    <property type="project" value="InterPro"/>
</dbReference>
<dbReference type="GO" id="GO:0046933">
    <property type="term" value="F:proton-transporting ATP synthase activity, rotational mechanism"/>
    <property type="evidence" value="ECO:0007669"/>
    <property type="project" value="UniProtKB-UniRule"/>
</dbReference>
<dbReference type="CDD" id="cd18110">
    <property type="entry name" value="ATP-synt_F1_beta_C"/>
    <property type="match status" value="1"/>
</dbReference>
<dbReference type="CDD" id="cd18115">
    <property type="entry name" value="ATP-synt_F1_beta_N"/>
    <property type="match status" value="1"/>
</dbReference>
<dbReference type="CDD" id="cd01133">
    <property type="entry name" value="F1-ATPase_beta_CD"/>
    <property type="match status" value="1"/>
</dbReference>
<dbReference type="FunFam" id="1.10.1140.10:FF:000001">
    <property type="entry name" value="ATP synthase subunit beta"/>
    <property type="match status" value="1"/>
</dbReference>
<dbReference type="FunFam" id="3.40.50.300:FF:000026">
    <property type="entry name" value="ATP synthase subunit beta"/>
    <property type="match status" value="1"/>
</dbReference>
<dbReference type="Gene3D" id="2.40.10.170">
    <property type="match status" value="1"/>
</dbReference>
<dbReference type="Gene3D" id="1.10.1140.10">
    <property type="entry name" value="Bovine Mitochondrial F1-atpase, Atp Synthase Beta Chain, Chain D, domain 3"/>
    <property type="match status" value="1"/>
</dbReference>
<dbReference type="Gene3D" id="3.40.50.300">
    <property type="entry name" value="P-loop containing nucleotide triphosphate hydrolases"/>
    <property type="match status" value="1"/>
</dbReference>
<dbReference type="HAMAP" id="MF_01347">
    <property type="entry name" value="ATP_synth_beta_bact"/>
    <property type="match status" value="1"/>
</dbReference>
<dbReference type="InterPro" id="IPR003593">
    <property type="entry name" value="AAA+_ATPase"/>
</dbReference>
<dbReference type="InterPro" id="IPR055190">
    <property type="entry name" value="ATP-synt_VA_C"/>
</dbReference>
<dbReference type="InterPro" id="IPR005722">
    <property type="entry name" value="ATP_synth_F1_bsu"/>
</dbReference>
<dbReference type="InterPro" id="IPR020003">
    <property type="entry name" value="ATPase_a/bsu_AS"/>
</dbReference>
<dbReference type="InterPro" id="IPR050053">
    <property type="entry name" value="ATPase_alpha/beta_chains"/>
</dbReference>
<dbReference type="InterPro" id="IPR004100">
    <property type="entry name" value="ATPase_F1/V1/A1_a/bsu_N"/>
</dbReference>
<dbReference type="InterPro" id="IPR036121">
    <property type="entry name" value="ATPase_F1/V1/A1_a/bsu_N_sf"/>
</dbReference>
<dbReference type="InterPro" id="IPR000194">
    <property type="entry name" value="ATPase_F1/V1/A1_a/bsu_nucl-bd"/>
</dbReference>
<dbReference type="InterPro" id="IPR024034">
    <property type="entry name" value="ATPase_F1/V1_b/a_C"/>
</dbReference>
<dbReference type="InterPro" id="IPR027417">
    <property type="entry name" value="P-loop_NTPase"/>
</dbReference>
<dbReference type="NCBIfam" id="TIGR01039">
    <property type="entry name" value="atpD"/>
    <property type="match status" value="1"/>
</dbReference>
<dbReference type="PANTHER" id="PTHR15184">
    <property type="entry name" value="ATP SYNTHASE"/>
    <property type="match status" value="1"/>
</dbReference>
<dbReference type="PANTHER" id="PTHR15184:SF71">
    <property type="entry name" value="ATP SYNTHASE SUBUNIT BETA, MITOCHONDRIAL"/>
    <property type="match status" value="1"/>
</dbReference>
<dbReference type="Pfam" id="PF00006">
    <property type="entry name" value="ATP-synt_ab"/>
    <property type="match status" value="1"/>
</dbReference>
<dbReference type="Pfam" id="PF02874">
    <property type="entry name" value="ATP-synt_ab_N"/>
    <property type="match status" value="1"/>
</dbReference>
<dbReference type="Pfam" id="PF22919">
    <property type="entry name" value="ATP-synt_VA_C"/>
    <property type="match status" value="1"/>
</dbReference>
<dbReference type="PIRSF" id="PIRSF039072">
    <property type="entry name" value="ATPase_subunit_beta"/>
    <property type="match status" value="1"/>
</dbReference>
<dbReference type="SMART" id="SM00382">
    <property type="entry name" value="AAA"/>
    <property type="match status" value="1"/>
</dbReference>
<dbReference type="SUPFAM" id="SSF47917">
    <property type="entry name" value="C-terminal domain of alpha and beta subunits of F1 ATP synthase"/>
    <property type="match status" value="1"/>
</dbReference>
<dbReference type="SUPFAM" id="SSF50615">
    <property type="entry name" value="N-terminal domain of alpha and beta subunits of F1 ATP synthase"/>
    <property type="match status" value="1"/>
</dbReference>
<dbReference type="SUPFAM" id="SSF52540">
    <property type="entry name" value="P-loop containing nucleoside triphosphate hydrolases"/>
    <property type="match status" value="1"/>
</dbReference>
<dbReference type="PROSITE" id="PS00152">
    <property type="entry name" value="ATPASE_ALPHA_BETA"/>
    <property type="match status" value="1"/>
</dbReference>
<evidence type="ECO:0000255" key="1">
    <source>
        <dbReference type="HAMAP-Rule" id="MF_01347"/>
    </source>
</evidence>
<evidence type="ECO:0000269" key="2">
    <source>
    </source>
</evidence>
<comment type="function">
    <text evidence="1">Produces ATP from ADP in the presence of a proton gradient across the membrane. The catalytic sites are hosted primarily by the beta subunits.</text>
</comment>
<comment type="catalytic activity">
    <reaction evidence="1">
        <text>ATP + H2O + 4 H(+)(in) = ADP + phosphate + 5 H(+)(out)</text>
        <dbReference type="Rhea" id="RHEA:57720"/>
        <dbReference type="ChEBI" id="CHEBI:15377"/>
        <dbReference type="ChEBI" id="CHEBI:15378"/>
        <dbReference type="ChEBI" id="CHEBI:30616"/>
        <dbReference type="ChEBI" id="CHEBI:43474"/>
        <dbReference type="ChEBI" id="CHEBI:456216"/>
        <dbReference type="EC" id="7.1.2.2"/>
    </reaction>
</comment>
<comment type="subunit">
    <text evidence="1">F-type ATPases have 2 components, CF(1) - the catalytic core - and CF(0) - the membrane proton channel. CF(1) has five subunits: alpha(3), beta(3), gamma(1), delta(1), epsilon(1). CF(0) has four main subunits: a(1), b(1), b'(1) and c(9-12).</text>
</comment>
<comment type="subcellular location">
    <subcellularLocation>
        <location evidence="1">Cell inner membrane</location>
        <topology evidence="1">Peripheral membrane protein</topology>
    </subcellularLocation>
</comment>
<comment type="similarity">
    <text evidence="1">Belongs to the ATPase alpha/beta chains family.</text>
</comment>